<protein>
    <recommendedName>
        <fullName>Glutamine synthetase root isozyme 3</fullName>
        <ecNumber>6.3.1.2</ecNumber>
    </recommendedName>
    <alternativeName>
        <fullName>GS112</fullName>
    </alternativeName>
    <alternativeName>
        <fullName>Glutamate--ammonia ligase</fullName>
    </alternativeName>
</protein>
<organism>
    <name type="scientific">Zea mays</name>
    <name type="common">Maize</name>
    <dbReference type="NCBI Taxonomy" id="4577"/>
    <lineage>
        <taxon>Eukaryota</taxon>
        <taxon>Viridiplantae</taxon>
        <taxon>Streptophyta</taxon>
        <taxon>Embryophyta</taxon>
        <taxon>Tracheophyta</taxon>
        <taxon>Spermatophyta</taxon>
        <taxon>Magnoliopsida</taxon>
        <taxon>Liliopsida</taxon>
        <taxon>Poales</taxon>
        <taxon>Poaceae</taxon>
        <taxon>PACMAD clade</taxon>
        <taxon>Panicoideae</taxon>
        <taxon>Andropogonodae</taxon>
        <taxon>Andropogoneae</taxon>
        <taxon>Tripsacinae</taxon>
        <taxon>Zea</taxon>
    </lineage>
</organism>
<evidence type="ECO:0000255" key="1">
    <source>
        <dbReference type="PROSITE-ProRule" id="PRU01330"/>
    </source>
</evidence>
<evidence type="ECO:0000255" key="2">
    <source>
        <dbReference type="PROSITE-ProRule" id="PRU01331"/>
    </source>
</evidence>
<evidence type="ECO:0000305" key="3"/>
<evidence type="ECO:0007829" key="4">
    <source>
        <dbReference type="PDB" id="2D3A"/>
    </source>
</evidence>
<evidence type="ECO:0007829" key="5">
    <source>
        <dbReference type="PDB" id="2D3B"/>
    </source>
</evidence>
<proteinExistence type="evidence at protein level"/>
<gene>
    <name type="primary">GLN4</name>
    <name type="synonym">GS1-3</name>
</gene>
<name>GLNA3_MAIZE</name>
<feature type="chain" id="PRO_0000153180" description="Glutamine synthetase root isozyme 3">
    <location>
        <begin position="1"/>
        <end position="356"/>
    </location>
</feature>
<feature type="domain" description="GS beta-grasp" evidence="1">
    <location>
        <begin position="19"/>
        <end position="99"/>
    </location>
</feature>
<feature type="domain" description="GS catalytic" evidence="2">
    <location>
        <begin position="106"/>
        <end position="356"/>
    </location>
</feature>
<feature type="sequence conflict" description="In Ref. 2; BAA03431." evidence="3" ref="2">
    <original>T</original>
    <variation>N</variation>
    <location>
        <position position="15"/>
    </location>
</feature>
<feature type="sequence conflict" description="In Ref. 2; BAA03431." evidence="3" ref="2">
    <original>DG</original>
    <variation>ER</variation>
    <location>
        <begin position="289"/>
        <end position="290"/>
    </location>
</feature>
<feature type="helix" evidence="4">
    <location>
        <begin position="4"/>
        <end position="8"/>
    </location>
</feature>
<feature type="helix" evidence="4">
    <location>
        <begin position="12"/>
        <end position="14"/>
    </location>
</feature>
<feature type="strand" evidence="4">
    <location>
        <begin position="19"/>
        <end position="26"/>
    </location>
</feature>
<feature type="strand" evidence="4">
    <location>
        <begin position="33"/>
        <end position="42"/>
    </location>
</feature>
<feature type="helix" evidence="4">
    <location>
        <begin position="47"/>
        <end position="49"/>
    </location>
</feature>
<feature type="strand" evidence="4">
    <location>
        <begin position="53"/>
        <end position="56"/>
    </location>
</feature>
<feature type="turn" evidence="4">
    <location>
        <begin position="57"/>
        <end position="61"/>
    </location>
</feature>
<feature type="strand" evidence="4">
    <location>
        <begin position="65"/>
        <end position="67"/>
    </location>
</feature>
<feature type="strand" evidence="4">
    <location>
        <begin position="69"/>
        <end position="79"/>
    </location>
</feature>
<feature type="turn" evidence="4">
    <location>
        <begin position="81"/>
        <end position="83"/>
    </location>
</feature>
<feature type="strand" evidence="4">
    <location>
        <begin position="88"/>
        <end position="95"/>
    </location>
</feature>
<feature type="helix" evidence="4">
    <location>
        <begin position="107"/>
        <end position="115"/>
    </location>
</feature>
<feature type="helix" evidence="4">
    <location>
        <begin position="117"/>
        <end position="122"/>
    </location>
</feature>
<feature type="strand" evidence="4">
    <location>
        <begin position="125"/>
        <end position="136"/>
    </location>
</feature>
<feature type="turn" evidence="4">
    <location>
        <begin position="137"/>
        <end position="139"/>
    </location>
</feature>
<feature type="strand" evidence="4">
    <location>
        <begin position="154"/>
        <end position="156"/>
    </location>
</feature>
<feature type="turn" evidence="4">
    <location>
        <begin position="163"/>
        <end position="165"/>
    </location>
</feature>
<feature type="helix" evidence="4">
    <location>
        <begin position="169"/>
        <end position="182"/>
    </location>
</feature>
<feature type="strand" evidence="4">
    <location>
        <begin position="186"/>
        <end position="191"/>
    </location>
</feature>
<feature type="strand" evidence="4">
    <location>
        <begin position="197"/>
        <end position="206"/>
    </location>
</feature>
<feature type="helix" evidence="4">
    <location>
        <begin position="208"/>
        <end position="228"/>
    </location>
</feature>
<feature type="strand" evidence="4">
    <location>
        <begin position="230"/>
        <end position="233"/>
    </location>
</feature>
<feature type="strand" evidence="5">
    <location>
        <begin position="236"/>
        <end position="239"/>
    </location>
</feature>
<feature type="strand" evidence="4">
    <location>
        <begin position="241"/>
        <end position="243"/>
    </location>
</feature>
<feature type="strand" evidence="4">
    <location>
        <begin position="247"/>
        <end position="253"/>
    </location>
</feature>
<feature type="turn" evidence="4">
    <location>
        <begin position="255"/>
        <end position="257"/>
    </location>
</feature>
<feature type="helix" evidence="4">
    <location>
        <begin position="262"/>
        <end position="275"/>
    </location>
</feature>
<feature type="helix" evidence="4">
    <location>
        <begin position="277"/>
        <end position="281"/>
    </location>
</feature>
<feature type="helix" evidence="4">
    <location>
        <begin position="288"/>
        <end position="291"/>
    </location>
</feature>
<feature type="strand" evidence="4">
    <location>
        <begin position="293"/>
        <end position="297"/>
    </location>
</feature>
<feature type="strand" evidence="4">
    <location>
        <begin position="306"/>
        <end position="309"/>
    </location>
</feature>
<feature type="strand" evidence="4">
    <location>
        <begin position="313"/>
        <end position="317"/>
    </location>
</feature>
<feature type="helix" evidence="4">
    <location>
        <begin position="319"/>
        <end position="323"/>
    </location>
</feature>
<feature type="strand" evidence="4">
    <location>
        <begin position="329"/>
        <end position="331"/>
    </location>
</feature>
<feature type="helix" evidence="4">
    <location>
        <begin position="340"/>
        <end position="351"/>
    </location>
</feature>
<sequence>MACLTDLVNLNLSDTTEKIIAEYIWIGGSGMDLRSKARTLSGPVTDPSKLPKWNYDGSSTGQAPGEDSEVILYPQAIFKDPFRRGNNILVMCDCYTPAGEPIPTNKRYNAAKIFSSPEVAAEEPWYGIEQEYTLLQKDTNWPLGWPIGGFPGPQGPYYCGIGAEKSFGRDIVDAHYKACLYAGINISGINGEVMPGQWEFQVGPSVGISSGDQVWVARYILERITEIAGVVVTFDPKPIPGDWNGAGAHTNYSTESMRKEGGYEVIKAAIEKLKLRHREHIAAYGEGNDGRLTGRHETADINTFSWGVANRGASVRVGRETEQNGKGYFEDRRPASNMDPYVVTSMIAETTIIWKP</sequence>
<comment type="function">
    <text>Plays a role in the flow of nitrogen into nitrogenous organic compounds.</text>
</comment>
<comment type="catalytic activity">
    <reaction>
        <text>L-glutamate + NH4(+) + ATP = L-glutamine + ADP + phosphate + H(+)</text>
        <dbReference type="Rhea" id="RHEA:16169"/>
        <dbReference type="ChEBI" id="CHEBI:15378"/>
        <dbReference type="ChEBI" id="CHEBI:28938"/>
        <dbReference type="ChEBI" id="CHEBI:29985"/>
        <dbReference type="ChEBI" id="CHEBI:30616"/>
        <dbReference type="ChEBI" id="CHEBI:43474"/>
        <dbReference type="ChEBI" id="CHEBI:58359"/>
        <dbReference type="ChEBI" id="CHEBI:456216"/>
        <dbReference type="EC" id="6.3.1.2"/>
    </reaction>
</comment>
<comment type="subunit">
    <text>Homooctamer.</text>
</comment>
<comment type="subcellular location">
    <subcellularLocation>
        <location>Cytoplasm</location>
    </subcellularLocation>
</comment>
<comment type="tissue specificity">
    <text>Found in all the tissues examined with higher expression found in tissues of the root.</text>
</comment>
<comment type="similarity">
    <text evidence="3">Belongs to the glutamine synthetase family.</text>
</comment>
<accession>P38561</accession>
<reference key="1">
    <citation type="journal article" date="1993" name="Plant Mol. Biol.">
        <title>Differential expression of six glutamine synthetase genes in Zea mays.</title>
        <authorList>
            <person name="Li M.-G."/>
            <person name="Villemur R."/>
            <person name="Hussey P.J."/>
            <person name="Silflow C.D."/>
            <person name="Gantt J.S."/>
            <person name="Snustad D.P."/>
        </authorList>
    </citation>
    <scope>NUCLEOTIDE SEQUENCE [MRNA]</scope>
    <source>
        <strain>cv. A188</strain>
        <tissue>Seedling</tissue>
    </source>
</reference>
<reference key="2">
    <citation type="journal article" date="1992" name="Plant Cell Physiol.">
        <title>Molecular cloning of the family of glutamine synthetase genes from maize: expression of genes for glutamine synthetase and ferredoxin-dependent glutamate synthase in photosynthetic and non-photosynthetic tissues.</title>
        <authorList>
            <person name="Sakakibara H."/>
            <person name="Kawabata S."/>
            <person name="Takahashi H."/>
            <person name="Hase T."/>
            <person name="Sugiyama T."/>
        </authorList>
    </citation>
    <scope>NUCLEOTIDE SEQUENCE [MRNA]</scope>
    <source>
        <strain>cv. Golden cross Bantam T51</strain>
        <tissue>Leaf</tissue>
    </source>
</reference>
<keyword id="KW-0002">3D-structure</keyword>
<keyword id="KW-0067">ATP-binding</keyword>
<keyword id="KW-0963">Cytoplasm</keyword>
<keyword id="KW-0436">Ligase</keyword>
<keyword id="KW-0547">Nucleotide-binding</keyword>
<keyword id="KW-1185">Reference proteome</keyword>
<dbReference type="EC" id="6.3.1.2"/>
<dbReference type="EMBL" id="X65928">
    <property type="protein sequence ID" value="CAA46721.1"/>
    <property type="molecule type" value="mRNA"/>
</dbReference>
<dbReference type="EMBL" id="D14577">
    <property type="protein sequence ID" value="BAA03431.1"/>
    <property type="molecule type" value="mRNA"/>
</dbReference>
<dbReference type="PIR" id="S39479">
    <property type="entry name" value="S39479"/>
</dbReference>
<dbReference type="RefSeq" id="NP_001105296.1">
    <property type="nucleotide sequence ID" value="NM_001111826.1"/>
</dbReference>
<dbReference type="PDB" id="2D3A">
    <property type="method" value="X-ray"/>
    <property type="resolution" value="2.63 A"/>
    <property type="chains" value="A/B/C/D/E/F/G/H/I/J=1-356"/>
</dbReference>
<dbReference type="PDB" id="2D3B">
    <property type="method" value="X-ray"/>
    <property type="resolution" value="3.50 A"/>
    <property type="chains" value="A/B/C/D/E/F/G/H/I/J=1-356"/>
</dbReference>
<dbReference type="PDB" id="2D3C">
    <property type="method" value="X-ray"/>
    <property type="resolution" value="3.81 A"/>
    <property type="chains" value="A/B/C/D/E/F/G/H/I/J=1-356"/>
</dbReference>
<dbReference type="PDBsum" id="2D3A"/>
<dbReference type="PDBsum" id="2D3B"/>
<dbReference type="PDBsum" id="2D3C"/>
<dbReference type="SMR" id="P38561"/>
<dbReference type="FunCoup" id="P38561">
    <property type="interactions" value="2538"/>
</dbReference>
<dbReference type="STRING" id="4577.P38561"/>
<dbReference type="PaxDb" id="4577-GRMZM5G872068_P01"/>
<dbReference type="GeneID" id="542214"/>
<dbReference type="KEGG" id="zma:542214"/>
<dbReference type="MaizeGDB" id="17151"/>
<dbReference type="eggNOG" id="KOG0683">
    <property type="taxonomic scope" value="Eukaryota"/>
</dbReference>
<dbReference type="InParanoid" id="P38561"/>
<dbReference type="OrthoDB" id="1936100at2759"/>
<dbReference type="BRENDA" id="6.3.1.2">
    <property type="organism ID" value="6752"/>
</dbReference>
<dbReference type="EvolutionaryTrace" id="P38561"/>
<dbReference type="Proteomes" id="UP000007305">
    <property type="component" value="Unplaced"/>
</dbReference>
<dbReference type="ExpressionAtlas" id="P38561">
    <property type="expression patterns" value="baseline and differential"/>
</dbReference>
<dbReference type="GO" id="GO:0005737">
    <property type="term" value="C:cytoplasm"/>
    <property type="evidence" value="ECO:0000318"/>
    <property type="project" value="GO_Central"/>
</dbReference>
<dbReference type="GO" id="GO:0005524">
    <property type="term" value="F:ATP binding"/>
    <property type="evidence" value="ECO:0007669"/>
    <property type="project" value="UniProtKB-KW"/>
</dbReference>
<dbReference type="GO" id="GO:0004356">
    <property type="term" value="F:glutamine synthetase activity"/>
    <property type="evidence" value="ECO:0000318"/>
    <property type="project" value="GO_Central"/>
</dbReference>
<dbReference type="GO" id="GO:0006542">
    <property type="term" value="P:glutamine biosynthetic process"/>
    <property type="evidence" value="ECO:0000318"/>
    <property type="project" value="GO_Central"/>
</dbReference>
<dbReference type="FunFam" id="3.30.590.10:FF:000004">
    <property type="entry name" value="Glutamine synthetase"/>
    <property type="match status" value="1"/>
</dbReference>
<dbReference type="FunFam" id="3.10.20.70:FF:000003">
    <property type="entry name" value="Glutamine synthetase, chloroplastic"/>
    <property type="match status" value="1"/>
</dbReference>
<dbReference type="Gene3D" id="3.10.20.70">
    <property type="entry name" value="Glutamine synthetase, N-terminal domain"/>
    <property type="match status" value="1"/>
</dbReference>
<dbReference type="Gene3D" id="3.30.590.10">
    <property type="entry name" value="Glutamine synthetase/guanido kinase, catalytic domain"/>
    <property type="match status" value="1"/>
</dbReference>
<dbReference type="InterPro" id="IPR008147">
    <property type="entry name" value="Gln_synt_N"/>
</dbReference>
<dbReference type="InterPro" id="IPR036651">
    <property type="entry name" value="Gln_synt_N_sf"/>
</dbReference>
<dbReference type="InterPro" id="IPR014746">
    <property type="entry name" value="Gln_synth/guanido_kin_cat_dom"/>
</dbReference>
<dbReference type="InterPro" id="IPR008146">
    <property type="entry name" value="Gln_synth_cat_dom"/>
</dbReference>
<dbReference type="InterPro" id="IPR027303">
    <property type="entry name" value="Gln_synth_gly_rich_site"/>
</dbReference>
<dbReference type="InterPro" id="IPR027302">
    <property type="entry name" value="Gln_synth_N_conserv_site"/>
</dbReference>
<dbReference type="InterPro" id="IPR050292">
    <property type="entry name" value="Glutamine_Synthetase"/>
</dbReference>
<dbReference type="PANTHER" id="PTHR20852">
    <property type="entry name" value="GLUTAMINE SYNTHETASE"/>
    <property type="match status" value="1"/>
</dbReference>
<dbReference type="PANTHER" id="PTHR20852:SF93">
    <property type="entry name" value="GLUTAMINE SYNTHETASE CYTOSOLIC ISOZYME 1-1"/>
    <property type="match status" value="1"/>
</dbReference>
<dbReference type="Pfam" id="PF00120">
    <property type="entry name" value="Gln-synt_C"/>
    <property type="match status" value="1"/>
</dbReference>
<dbReference type="Pfam" id="PF03951">
    <property type="entry name" value="Gln-synt_N"/>
    <property type="match status" value="1"/>
</dbReference>
<dbReference type="SMART" id="SM01230">
    <property type="entry name" value="Gln-synt_C"/>
    <property type="match status" value="1"/>
</dbReference>
<dbReference type="SUPFAM" id="SSF54368">
    <property type="entry name" value="Glutamine synthetase, N-terminal domain"/>
    <property type="match status" value="1"/>
</dbReference>
<dbReference type="SUPFAM" id="SSF55931">
    <property type="entry name" value="Glutamine synthetase/guanido kinase"/>
    <property type="match status" value="1"/>
</dbReference>
<dbReference type="PROSITE" id="PS00180">
    <property type="entry name" value="GLNA_1"/>
    <property type="match status" value="1"/>
</dbReference>
<dbReference type="PROSITE" id="PS00181">
    <property type="entry name" value="GLNA_ATP"/>
    <property type="match status" value="1"/>
</dbReference>
<dbReference type="PROSITE" id="PS51986">
    <property type="entry name" value="GS_BETA_GRASP"/>
    <property type="match status" value="1"/>
</dbReference>
<dbReference type="PROSITE" id="PS51987">
    <property type="entry name" value="GS_CATALYTIC"/>
    <property type="match status" value="1"/>
</dbReference>